<dbReference type="EC" id="2.7.7.60" evidence="1"/>
<dbReference type="EMBL" id="CP000103">
    <property type="protein sequence ID" value="ABB75420.1"/>
    <property type="molecule type" value="Genomic_DNA"/>
</dbReference>
<dbReference type="RefSeq" id="WP_011381429.1">
    <property type="nucleotide sequence ID" value="NC_007614.1"/>
</dbReference>
<dbReference type="SMR" id="Q2Y751"/>
<dbReference type="STRING" id="323848.Nmul_A2127"/>
<dbReference type="KEGG" id="nmu:Nmul_A2127"/>
<dbReference type="eggNOG" id="COG1211">
    <property type="taxonomic scope" value="Bacteria"/>
</dbReference>
<dbReference type="HOGENOM" id="CLU_061281_3_0_4"/>
<dbReference type="OrthoDB" id="9806837at2"/>
<dbReference type="UniPathway" id="UPA00056">
    <property type="reaction ID" value="UER00093"/>
</dbReference>
<dbReference type="Proteomes" id="UP000002718">
    <property type="component" value="Chromosome"/>
</dbReference>
<dbReference type="GO" id="GO:0050518">
    <property type="term" value="F:2-C-methyl-D-erythritol 4-phosphate cytidylyltransferase activity"/>
    <property type="evidence" value="ECO:0007669"/>
    <property type="project" value="UniProtKB-UniRule"/>
</dbReference>
<dbReference type="GO" id="GO:0019288">
    <property type="term" value="P:isopentenyl diphosphate biosynthetic process, methylerythritol 4-phosphate pathway"/>
    <property type="evidence" value="ECO:0007669"/>
    <property type="project" value="UniProtKB-UniRule"/>
</dbReference>
<dbReference type="CDD" id="cd02516">
    <property type="entry name" value="CDP-ME_synthetase"/>
    <property type="match status" value="1"/>
</dbReference>
<dbReference type="FunFam" id="3.90.550.10:FF:000003">
    <property type="entry name" value="2-C-methyl-D-erythritol 4-phosphate cytidylyltransferase"/>
    <property type="match status" value="1"/>
</dbReference>
<dbReference type="Gene3D" id="3.90.550.10">
    <property type="entry name" value="Spore Coat Polysaccharide Biosynthesis Protein SpsA, Chain A"/>
    <property type="match status" value="1"/>
</dbReference>
<dbReference type="HAMAP" id="MF_00108">
    <property type="entry name" value="IspD"/>
    <property type="match status" value="1"/>
</dbReference>
<dbReference type="InterPro" id="IPR001228">
    <property type="entry name" value="IspD"/>
</dbReference>
<dbReference type="InterPro" id="IPR034683">
    <property type="entry name" value="IspD/TarI"/>
</dbReference>
<dbReference type="InterPro" id="IPR050088">
    <property type="entry name" value="IspD/TarI_cytidylyltransf_bact"/>
</dbReference>
<dbReference type="InterPro" id="IPR018294">
    <property type="entry name" value="ISPD_synthase_CS"/>
</dbReference>
<dbReference type="InterPro" id="IPR029044">
    <property type="entry name" value="Nucleotide-diphossugar_trans"/>
</dbReference>
<dbReference type="NCBIfam" id="TIGR00453">
    <property type="entry name" value="ispD"/>
    <property type="match status" value="1"/>
</dbReference>
<dbReference type="PANTHER" id="PTHR32125">
    <property type="entry name" value="2-C-METHYL-D-ERYTHRITOL 4-PHOSPHATE CYTIDYLYLTRANSFERASE, CHLOROPLASTIC"/>
    <property type="match status" value="1"/>
</dbReference>
<dbReference type="PANTHER" id="PTHR32125:SF4">
    <property type="entry name" value="2-C-METHYL-D-ERYTHRITOL 4-PHOSPHATE CYTIDYLYLTRANSFERASE, CHLOROPLASTIC"/>
    <property type="match status" value="1"/>
</dbReference>
<dbReference type="Pfam" id="PF01128">
    <property type="entry name" value="IspD"/>
    <property type="match status" value="1"/>
</dbReference>
<dbReference type="SUPFAM" id="SSF53448">
    <property type="entry name" value="Nucleotide-diphospho-sugar transferases"/>
    <property type="match status" value="1"/>
</dbReference>
<dbReference type="PROSITE" id="PS01295">
    <property type="entry name" value="ISPD"/>
    <property type="match status" value="1"/>
</dbReference>
<evidence type="ECO:0000255" key="1">
    <source>
        <dbReference type="HAMAP-Rule" id="MF_00108"/>
    </source>
</evidence>
<sequence length="232" mass="25232">MQNFFALIPAAGSGSRMGDRMPKQYLTLAGKPMIHHALATLCNSPRLSRVFVVLSPGDVEWARHDWSEFSSKLSMLECGGATRAETVLNGLKAAQEGTAIEDDDWVLVHDAARPCLGGKLLDKLMDELEEDEVGGLLAVPVADTLKRSDPTCRAERTEPREGLWQAQTPQMFRYRTLVNALSGAGGVTMTDDAGAIEALGLRPKLVVSDARNLKVTYPQDLALAELILKNCK</sequence>
<accession>Q2Y751</accession>
<protein>
    <recommendedName>
        <fullName evidence="1">2-C-methyl-D-erythritol 4-phosphate cytidylyltransferase</fullName>
        <ecNumber evidence="1">2.7.7.60</ecNumber>
    </recommendedName>
    <alternativeName>
        <fullName evidence="1">4-diphosphocytidyl-2C-methyl-D-erythritol synthase</fullName>
    </alternativeName>
    <alternativeName>
        <fullName evidence="1">MEP cytidylyltransferase</fullName>
        <shortName evidence="1">MCT</shortName>
    </alternativeName>
</protein>
<reference key="1">
    <citation type="submission" date="2005-08" db="EMBL/GenBank/DDBJ databases">
        <title>Complete sequence of chromosome 1 of Nitrosospira multiformis ATCC 25196.</title>
        <authorList>
            <person name="Copeland A."/>
            <person name="Lucas S."/>
            <person name="Lapidus A."/>
            <person name="Barry K."/>
            <person name="Detter J.C."/>
            <person name="Glavina T."/>
            <person name="Hammon N."/>
            <person name="Israni S."/>
            <person name="Pitluck S."/>
            <person name="Chain P."/>
            <person name="Malfatti S."/>
            <person name="Shin M."/>
            <person name="Vergez L."/>
            <person name="Schmutz J."/>
            <person name="Larimer F."/>
            <person name="Land M."/>
            <person name="Hauser L."/>
            <person name="Kyrpides N."/>
            <person name="Lykidis A."/>
            <person name="Richardson P."/>
        </authorList>
    </citation>
    <scope>NUCLEOTIDE SEQUENCE [LARGE SCALE GENOMIC DNA]</scope>
    <source>
        <strain>ATCC 25196 / NCIMB 11849 / C 71</strain>
    </source>
</reference>
<name>ISPD_NITMU</name>
<gene>
    <name evidence="1" type="primary">ispD</name>
    <name type="ordered locus">Nmul_A2127</name>
</gene>
<keyword id="KW-0414">Isoprene biosynthesis</keyword>
<keyword id="KW-0548">Nucleotidyltransferase</keyword>
<keyword id="KW-1185">Reference proteome</keyword>
<keyword id="KW-0808">Transferase</keyword>
<proteinExistence type="inferred from homology"/>
<organism>
    <name type="scientific">Nitrosospira multiformis (strain ATCC 25196 / NCIMB 11849 / C 71)</name>
    <dbReference type="NCBI Taxonomy" id="323848"/>
    <lineage>
        <taxon>Bacteria</taxon>
        <taxon>Pseudomonadati</taxon>
        <taxon>Pseudomonadota</taxon>
        <taxon>Betaproteobacteria</taxon>
        <taxon>Nitrosomonadales</taxon>
        <taxon>Nitrosomonadaceae</taxon>
        <taxon>Nitrosospira</taxon>
    </lineage>
</organism>
<feature type="chain" id="PRO_0000237801" description="2-C-methyl-D-erythritol 4-phosphate cytidylyltransferase">
    <location>
        <begin position="1"/>
        <end position="232"/>
    </location>
</feature>
<feature type="site" description="Transition state stabilizer" evidence="1">
    <location>
        <position position="16"/>
    </location>
</feature>
<feature type="site" description="Transition state stabilizer" evidence="1">
    <location>
        <position position="23"/>
    </location>
</feature>
<feature type="site" description="Positions MEP for the nucleophilic attack" evidence="1">
    <location>
        <position position="160"/>
    </location>
</feature>
<feature type="site" description="Positions MEP for the nucleophilic attack" evidence="1">
    <location>
        <position position="214"/>
    </location>
</feature>
<comment type="function">
    <text evidence="1">Catalyzes the formation of 4-diphosphocytidyl-2-C-methyl-D-erythritol from CTP and 2-C-methyl-D-erythritol 4-phosphate (MEP).</text>
</comment>
<comment type="catalytic activity">
    <reaction evidence="1">
        <text>2-C-methyl-D-erythritol 4-phosphate + CTP + H(+) = 4-CDP-2-C-methyl-D-erythritol + diphosphate</text>
        <dbReference type="Rhea" id="RHEA:13429"/>
        <dbReference type="ChEBI" id="CHEBI:15378"/>
        <dbReference type="ChEBI" id="CHEBI:33019"/>
        <dbReference type="ChEBI" id="CHEBI:37563"/>
        <dbReference type="ChEBI" id="CHEBI:57823"/>
        <dbReference type="ChEBI" id="CHEBI:58262"/>
        <dbReference type="EC" id="2.7.7.60"/>
    </reaction>
</comment>
<comment type="pathway">
    <text evidence="1">Isoprenoid biosynthesis; isopentenyl diphosphate biosynthesis via DXP pathway; isopentenyl diphosphate from 1-deoxy-D-xylulose 5-phosphate: step 2/6.</text>
</comment>
<comment type="similarity">
    <text evidence="1">Belongs to the IspD/TarI cytidylyltransferase family. IspD subfamily.</text>
</comment>